<protein>
    <recommendedName>
        <fullName>Ribulose bisphosphate carboxylase large chain</fullName>
        <shortName>RuBisCO large subunit</shortName>
        <ecNumber>4.1.1.39</ecNumber>
    </recommendedName>
</protein>
<evidence type="ECO:0000250" key="1"/>
<evidence type="ECO:0000305" key="2"/>
<keyword id="KW-0007">Acetylation</keyword>
<keyword id="KW-0113">Calvin cycle</keyword>
<keyword id="KW-0120">Carbon dioxide fixation</keyword>
<keyword id="KW-0150">Chloroplast</keyword>
<keyword id="KW-0456">Lyase</keyword>
<keyword id="KW-0488">Methylation</keyword>
<keyword id="KW-0503">Monooxygenase</keyword>
<keyword id="KW-0560">Oxidoreductase</keyword>
<keyword id="KW-0601">Photorespiration</keyword>
<keyword id="KW-0602">Photosynthesis</keyword>
<keyword id="KW-0934">Plastid</keyword>
<name>RBL_EUOMA</name>
<feature type="propeptide" id="PRO_0000031211" evidence="1">
    <location>
        <begin position="1"/>
        <end position="2"/>
    </location>
</feature>
<feature type="chain" id="PRO_0000031212" description="Ribulose bisphosphate carboxylase large chain">
    <location>
        <begin position="3"/>
        <end position="58" status="greater than"/>
    </location>
</feature>
<feature type="modified residue" description="N-acetylproline" evidence="1">
    <location>
        <position position="3"/>
    </location>
</feature>
<feature type="modified residue" description="N6,N6,N6-trimethyllysine" evidence="1">
    <location>
        <position position="14"/>
    </location>
</feature>
<feature type="non-terminal residue">
    <location>
        <position position="58"/>
    </location>
</feature>
<proteinExistence type="inferred from homology"/>
<geneLocation type="chloroplast"/>
<dbReference type="EC" id="4.1.1.39"/>
<dbReference type="EMBL" id="X69734">
    <property type="protein sequence ID" value="CAA49389.1"/>
    <property type="molecule type" value="Genomic_DNA"/>
</dbReference>
<dbReference type="EMBL" id="X69738">
    <property type="protein sequence ID" value="CAA49393.1"/>
    <property type="molecule type" value="Genomic_DNA"/>
</dbReference>
<dbReference type="PIR" id="S31547">
    <property type="entry name" value="S31547"/>
</dbReference>
<dbReference type="PIR" id="S31551">
    <property type="entry name" value="S31551"/>
</dbReference>
<dbReference type="SMR" id="P31186"/>
<dbReference type="GO" id="GO:0009507">
    <property type="term" value="C:chloroplast"/>
    <property type="evidence" value="ECO:0007669"/>
    <property type="project" value="UniProtKB-SubCell"/>
</dbReference>
<dbReference type="GO" id="GO:0004497">
    <property type="term" value="F:monooxygenase activity"/>
    <property type="evidence" value="ECO:0007669"/>
    <property type="project" value="UniProtKB-KW"/>
</dbReference>
<dbReference type="GO" id="GO:0016984">
    <property type="term" value="F:ribulose-bisphosphate carboxylase activity"/>
    <property type="evidence" value="ECO:0007669"/>
    <property type="project" value="UniProtKB-EC"/>
</dbReference>
<dbReference type="GO" id="GO:0009853">
    <property type="term" value="P:photorespiration"/>
    <property type="evidence" value="ECO:0007669"/>
    <property type="project" value="UniProtKB-KW"/>
</dbReference>
<dbReference type="GO" id="GO:0019253">
    <property type="term" value="P:reductive pentose-phosphate cycle"/>
    <property type="evidence" value="ECO:0007669"/>
    <property type="project" value="UniProtKB-KW"/>
</dbReference>
<dbReference type="Gene3D" id="3.30.70.150">
    <property type="entry name" value="RuBisCO large subunit, N-terminal domain"/>
    <property type="match status" value="1"/>
</dbReference>
<dbReference type="InterPro" id="IPR033966">
    <property type="entry name" value="RuBisCO"/>
</dbReference>
<dbReference type="InterPro" id="IPR017443">
    <property type="entry name" value="RuBisCO_lsu_fd_N"/>
</dbReference>
<dbReference type="InterPro" id="IPR036422">
    <property type="entry name" value="RuBisCO_lsu_N_sf"/>
</dbReference>
<dbReference type="PANTHER" id="PTHR42704">
    <property type="entry name" value="RIBULOSE BISPHOSPHATE CARBOXYLASE"/>
    <property type="match status" value="1"/>
</dbReference>
<dbReference type="PANTHER" id="PTHR42704:SF15">
    <property type="entry name" value="RIBULOSE BISPHOSPHATE CARBOXYLASE LARGE CHAIN"/>
    <property type="match status" value="1"/>
</dbReference>
<dbReference type="Pfam" id="PF02788">
    <property type="entry name" value="RuBisCO_large_N"/>
    <property type="match status" value="1"/>
</dbReference>
<dbReference type="SUPFAM" id="SSF54966">
    <property type="entry name" value="RuBisCO, large subunit, small (N-terminal) domain"/>
    <property type="match status" value="1"/>
</dbReference>
<sequence length="58" mass="6267">MSPQTETKAMVGFKAGVKDYKLTYYTPDYETKDTDILAAFRVTPQPGVPPEEAGAAVA</sequence>
<reference key="1">
    <citation type="journal article" date="1994" name="Mol. Phylogenet. Evol.">
        <title>Molecular phylogeny of families related to Celastrales based on rbcL 5' flanking sequences.</title>
        <authorList>
            <person name="Savolainen V."/>
            <person name="Manen J.F."/>
            <person name="Douzery E.J.P."/>
            <person name="Spichiger R."/>
        </authorList>
    </citation>
    <scope>NUCLEOTIDE SEQUENCE [GENOMIC DNA]</scope>
    <source>
        <strain>Sample EBU3</strain>
        <strain>Sample EMA6</strain>
    </source>
</reference>
<comment type="function">
    <text evidence="1">RuBisCO catalyzes two reactions: the carboxylation of D-ribulose 1,5-bisphosphate, the primary event in carbon dioxide fixation, as well as the oxidative fragmentation of the pentose substrate in the photorespiration process. Both reactions occur simultaneously and in competition at the same active site (By similarity).</text>
</comment>
<comment type="catalytic activity">
    <reaction>
        <text>2 (2R)-3-phosphoglycerate + 2 H(+) = D-ribulose 1,5-bisphosphate + CO2 + H2O</text>
        <dbReference type="Rhea" id="RHEA:23124"/>
        <dbReference type="ChEBI" id="CHEBI:15377"/>
        <dbReference type="ChEBI" id="CHEBI:15378"/>
        <dbReference type="ChEBI" id="CHEBI:16526"/>
        <dbReference type="ChEBI" id="CHEBI:57870"/>
        <dbReference type="ChEBI" id="CHEBI:58272"/>
        <dbReference type="EC" id="4.1.1.39"/>
    </reaction>
</comment>
<comment type="catalytic activity">
    <reaction>
        <text>D-ribulose 1,5-bisphosphate + O2 = 2-phosphoglycolate + (2R)-3-phosphoglycerate + 2 H(+)</text>
        <dbReference type="Rhea" id="RHEA:36631"/>
        <dbReference type="ChEBI" id="CHEBI:15378"/>
        <dbReference type="ChEBI" id="CHEBI:15379"/>
        <dbReference type="ChEBI" id="CHEBI:57870"/>
        <dbReference type="ChEBI" id="CHEBI:58033"/>
        <dbReference type="ChEBI" id="CHEBI:58272"/>
    </reaction>
</comment>
<comment type="subunit">
    <text evidence="1">Heterohexadecamer of 8 large chains and 8 small chains.</text>
</comment>
<comment type="subcellular location">
    <subcellularLocation>
        <location>Plastid</location>
        <location>Chloroplast</location>
    </subcellularLocation>
</comment>
<comment type="miscellaneous">
    <text evidence="1">The basic functional RuBisCO is composed of a large chain homodimer in a 'head-to-tail' conformation. In form I RuBisCO this homodimer is arranged in a barrel-like tetramer with the small subunits forming a tetrameric 'cap' on each end of the 'barrel' (By similarity).</text>
</comment>
<comment type="similarity">
    <text evidence="2">Belongs to the RuBisCO large chain family. Type I subfamily.</text>
</comment>
<accession>P31186</accession>
<accession>P31185</accession>
<gene>
    <name type="primary">rbcL</name>
</gene>
<organism>
    <name type="scientific">Euonymus maackii</name>
    <name type="common">Maack's spindle tree</name>
    <name type="synonym">Euonymus hamiltonianus var. maackii</name>
    <dbReference type="NCBI Taxonomy" id="4309"/>
    <lineage>
        <taxon>Eukaryota</taxon>
        <taxon>Viridiplantae</taxon>
        <taxon>Streptophyta</taxon>
        <taxon>Embryophyta</taxon>
        <taxon>Tracheophyta</taxon>
        <taxon>Spermatophyta</taxon>
        <taxon>Magnoliopsida</taxon>
        <taxon>eudicotyledons</taxon>
        <taxon>Gunneridae</taxon>
        <taxon>Pentapetalae</taxon>
        <taxon>rosids</taxon>
        <taxon>fabids</taxon>
        <taxon>Celastrales</taxon>
        <taxon>Celastraceae</taxon>
        <taxon>Euonymus</taxon>
    </lineage>
</organism>